<proteinExistence type="inferred from homology"/>
<sequence length="200" mass="22577">MSGFQQHTGLVVPLDTANIDTDAIIPKQFLQKVNRIGFGKHLFHDWRFLDDAGQQPNPEFVMNAPRYKGASILLARENFGCGSSREHAPWALADYGIQVMIAPSFADIFYGNSINNQMVPVRLTEQEVDELFQFVEANEGAEITVDLEAMKVRANGKEYSFEIDEFRRHCLLNGLDNIGLTLQHADKISEFEAKIPSFLK</sequence>
<dbReference type="EC" id="4.2.1.33" evidence="1"/>
<dbReference type="EMBL" id="FM954972">
    <property type="protein sequence ID" value="CAV17386.1"/>
    <property type="molecule type" value="Genomic_DNA"/>
</dbReference>
<dbReference type="SMR" id="B7VIE9"/>
<dbReference type="STRING" id="575788.VS_0377"/>
<dbReference type="KEGG" id="vsp:VS_0377"/>
<dbReference type="PATRIC" id="fig|575788.5.peg.1742"/>
<dbReference type="eggNOG" id="COG0066">
    <property type="taxonomic scope" value="Bacteria"/>
</dbReference>
<dbReference type="HOGENOM" id="CLU_081378_0_3_6"/>
<dbReference type="UniPathway" id="UPA00048">
    <property type="reaction ID" value="UER00071"/>
</dbReference>
<dbReference type="Proteomes" id="UP000009100">
    <property type="component" value="Chromosome 1"/>
</dbReference>
<dbReference type="GO" id="GO:0009316">
    <property type="term" value="C:3-isopropylmalate dehydratase complex"/>
    <property type="evidence" value="ECO:0007669"/>
    <property type="project" value="InterPro"/>
</dbReference>
<dbReference type="GO" id="GO:0003861">
    <property type="term" value="F:3-isopropylmalate dehydratase activity"/>
    <property type="evidence" value="ECO:0007669"/>
    <property type="project" value="UniProtKB-UniRule"/>
</dbReference>
<dbReference type="GO" id="GO:0009098">
    <property type="term" value="P:L-leucine biosynthetic process"/>
    <property type="evidence" value="ECO:0007669"/>
    <property type="project" value="UniProtKB-UniRule"/>
</dbReference>
<dbReference type="CDD" id="cd01577">
    <property type="entry name" value="IPMI_Swivel"/>
    <property type="match status" value="1"/>
</dbReference>
<dbReference type="FunFam" id="3.20.19.10:FF:000003">
    <property type="entry name" value="3-isopropylmalate dehydratase small subunit"/>
    <property type="match status" value="1"/>
</dbReference>
<dbReference type="Gene3D" id="3.20.19.10">
    <property type="entry name" value="Aconitase, domain 4"/>
    <property type="match status" value="1"/>
</dbReference>
<dbReference type="HAMAP" id="MF_01031">
    <property type="entry name" value="LeuD_type1"/>
    <property type="match status" value="1"/>
</dbReference>
<dbReference type="InterPro" id="IPR004431">
    <property type="entry name" value="3-IsopropMal_deHydase_ssu"/>
</dbReference>
<dbReference type="InterPro" id="IPR015928">
    <property type="entry name" value="Aconitase/3IPM_dehydase_swvl"/>
</dbReference>
<dbReference type="InterPro" id="IPR000573">
    <property type="entry name" value="AconitaseA/IPMdHydase_ssu_swvl"/>
</dbReference>
<dbReference type="InterPro" id="IPR033940">
    <property type="entry name" value="IPMI_Swivel"/>
</dbReference>
<dbReference type="InterPro" id="IPR050075">
    <property type="entry name" value="LeuD"/>
</dbReference>
<dbReference type="NCBIfam" id="TIGR00171">
    <property type="entry name" value="leuD"/>
    <property type="match status" value="1"/>
</dbReference>
<dbReference type="NCBIfam" id="NF002458">
    <property type="entry name" value="PRK01641.1"/>
    <property type="match status" value="1"/>
</dbReference>
<dbReference type="PANTHER" id="PTHR43345:SF5">
    <property type="entry name" value="3-ISOPROPYLMALATE DEHYDRATASE SMALL SUBUNIT"/>
    <property type="match status" value="1"/>
</dbReference>
<dbReference type="PANTHER" id="PTHR43345">
    <property type="entry name" value="3-ISOPROPYLMALATE DEHYDRATASE SMALL SUBUNIT 2-RELATED-RELATED"/>
    <property type="match status" value="1"/>
</dbReference>
<dbReference type="Pfam" id="PF00694">
    <property type="entry name" value="Aconitase_C"/>
    <property type="match status" value="1"/>
</dbReference>
<dbReference type="SUPFAM" id="SSF52016">
    <property type="entry name" value="LeuD/IlvD-like"/>
    <property type="match status" value="1"/>
</dbReference>
<gene>
    <name evidence="1" type="primary">leuD</name>
    <name type="ordered locus">VS_0377</name>
</gene>
<reference key="1">
    <citation type="submission" date="2009-02" db="EMBL/GenBank/DDBJ databases">
        <title>Vibrio splendidus str. LGP32 complete genome.</title>
        <authorList>
            <person name="Mazel D."/>
            <person name="Le Roux F."/>
        </authorList>
    </citation>
    <scope>NUCLEOTIDE SEQUENCE [LARGE SCALE GENOMIC DNA]</scope>
    <source>
        <strain>LGP32</strain>
    </source>
</reference>
<organism>
    <name type="scientific">Vibrio atlanticus (strain LGP32)</name>
    <name type="common">Vibrio splendidus (strain Mel32)</name>
    <dbReference type="NCBI Taxonomy" id="575788"/>
    <lineage>
        <taxon>Bacteria</taxon>
        <taxon>Pseudomonadati</taxon>
        <taxon>Pseudomonadota</taxon>
        <taxon>Gammaproteobacteria</taxon>
        <taxon>Vibrionales</taxon>
        <taxon>Vibrionaceae</taxon>
        <taxon>Vibrio</taxon>
    </lineage>
</organism>
<accession>B7VIE9</accession>
<name>LEUD_VIBA3</name>
<comment type="function">
    <text evidence="1">Catalyzes the isomerization between 2-isopropylmalate and 3-isopropylmalate, via the formation of 2-isopropylmaleate.</text>
</comment>
<comment type="catalytic activity">
    <reaction evidence="1">
        <text>(2R,3S)-3-isopropylmalate = (2S)-2-isopropylmalate</text>
        <dbReference type="Rhea" id="RHEA:32287"/>
        <dbReference type="ChEBI" id="CHEBI:1178"/>
        <dbReference type="ChEBI" id="CHEBI:35121"/>
        <dbReference type="EC" id="4.2.1.33"/>
    </reaction>
</comment>
<comment type="pathway">
    <text evidence="1">Amino-acid biosynthesis; L-leucine biosynthesis; L-leucine from 3-methyl-2-oxobutanoate: step 2/4.</text>
</comment>
<comment type="subunit">
    <text evidence="1">Heterodimer of LeuC and LeuD.</text>
</comment>
<comment type="similarity">
    <text evidence="1">Belongs to the LeuD family. LeuD type 1 subfamily.</text>
</comment>
<keyword id="KW-0028">Amino-acid biosynthesis</keyword>
<keyword id="KW-0100">Branched-chain amino acid biosynthesis</keyword>
<keyword id="KW-0432">Leucine biosynthesis</keyword>
<keyword id="KW-0456">Lyase</keyword>
<evidence type="ECO:0000255" key="1">
    <source>
        <dbReference type="HAMAP-Rule" id="MF_01031"/>
    </source>
</evidence>
<protein>
    <recommendedName>
        <fullName evidence="1">3-isopropylmalate dehydratase small subunit</fullName>
        <ecNumber evidence="1">4.2.1.33</ecNumber>
    </recommendedName>
    <alternativeName>
        <fullName evidence="1">Alpha-IPM isomerase</fullName>
        <shortName evidence="1">IPMI</shortName>
    </alternativeName>
    <alternativeName>
        <fullName evidence="1">Isopropylmalate isomerase</fullName>
    </alternativeName>
</protein>
<feature type="chain" id="PRO_1000149427" description="3-isopropylmalate dehydratase small subunit">
    <location>
        <begin position="1"/>
        <end position="200"/>
    </location>
</feature>